<proteinExistence type="inferred from homology"/>
<accession>B9DSW9</accession>
<protein>
    <recommendedName>
        <fullName evidence="1">Large ribosomal subunit protein uL15</fullName>
    </recommendedName>
    <alternativeName>
        <fullName evidence="3">50S ribosomal protein L15</fullName>
    </alternativeName>
</protein>
<dbReference type="EMBL" id="AM946015">
    <property type="protein sequence ID" value="CAR40471.1"/>
    <property type="molecule type" value="Genomic_DNA"/>
</dbReference>
<dbReference type="RefSeq" id="WP_012657648.1">
    <property type="nucleotide sequence ID" value="NC_012004.1"/>
</dbReference>
<dbReference type="SMR" id="B9DSW9"/>
<dbReference type="STRING" id="218495.SUB0087"/>
<dbReference type="KEGG" id="sub:SUB0087"/>
<dbReference type="eggNOG" id="COG0200">
    <property type="taxonomic scope" value="Bacteria"/>
</dbReference>
<dbReference type="HOGENOM" id="CLU_055188_4_2_9"/>
<dbReference type="OrthoDB" id="9810293at2"/>
<dbReference type="Proteomes" id="UP000000449">
    <property type="component" value="Chromosome"/>
</dbReference>
<dbReference type="GO" id="GO:0022625">
    <property type="term" value="C:cytosolic large ribosomal subunit"/>
    <property type="evidence" value="ECO:0007669"/>
    <property type="project" value="TreeGrafter"/>
</dbReference>
<dbReference type="GO" id="GO:0019843">
    <property type="term" value="F:rRNA binding"/>
    <property type="evidence" value="ECO:0007669"/>
    <property type="project" value="UniProtKB-UniRule"/>
</dbReference>
<dbReference type="GO" id="GO:0003735">
    <property type="term" value="F:structural constituent of ribosome"/>
    <property type="evidence" value="ECO:0007669"/>
    <property type="project" value="InterPro"/>
</dbReference>
<dbReference type="GO" id="GO:0006412">
    <property type="term" value="P:translation"/>
    <property type="evidence" value="ECO:0007669"/>
    <property type="project" value="UniProtKB-UniRule"/>
</dbReference>
<dbReference type="Gene3D" id="3.100.10.10">
    <property type="match status" value="1"/>
</dbReference>
<dbReference type="HAMAP" id="MF_01341">
    <property type="entry name" value="Ribosomal_uL15"/>
    <property type="match status" value="1"/>
</dbReference>
<dbReference type="InterPro" id="IPR030878">
    <property type="entry name" value="Ribosomal_uL15"/>
</dbReference>
<dbReference type="InterPro" id="IPR021131">
    <property type="entry name" value="Ribosomal_uL15/eL18"/>
</dbReference>
<dbReference type="InterPro" id="IPR036227">
    <property type="entry name" value="Ribosomal_uL15/eL18_sf"/>
</dbReference>
<dbReference type="InterPro" id="IPR005749">
    <property type="entry name" value="Ribosomal_uL15_bac-type"/>
</dbReference>
<dbReference type="InterPro" id="IPR001196">
    <property type="entry name" value="Ribosomal_uL15_CS"/>
</dbReference>
<dbReference type="NCBIfam" id="TIGR01071">
    <property type="entry name" value="rplO_bact"/>
    <property type="match status" value="1"/>
</dbReference>
<dbReference type="PANTHER" id="PTHR12934">
    <property type="entry name" value="50S RIBOSOMAL PROTEIN L15"/>
    <property type="match status" value="1"/>
</dbReference>
<dbReference type="PANTHER" id="PTHR12934:SF11">
    <property type="entry name" value="LARGE RIBOSOMAL SUBUNIT PROTEIN UL15M"/>
    <property type="match status" value="1"/>
</dbReference>
<dbReference type="Pfam" id="PF00828">
    <property type="entry name" value="Ribosomal_L27A"/>
    <property type="match status" value="1"/>
</dbReference>
<dbReference type="SUPFAM" id="SSF52080">
    <property type="entry name" value="Ribosomal proteins L15p and L18e"/>
    <property type="match status" value="1"/>
</dbReference>
<dbReference type="PROSITE" id="PS00475">
    <property type="entry name" value="RIBOSOMAL_L15"/>
    <property type="match status" value="1"/>
</dbReference>
<name>RL15_STRU0</name>
<organism>
    <name type="scientific">Streptococcus uberis (strain ATCC BAA-854 / 0140J)</name>
    <dbReference type="NCBI Taxonomy" id="218495"/>
    <lineage>
        <taxon>Bacteria</taxon>
        <taxon>Bacillati</taxon>
        <taxon>Bacillota</taxon>
        <taxon>Bacilli</taxon>
        <taxon>Lactobacillales</taxon>
        <taxon>Streptococcaceae</taxon>
        <taxon>Streptococcus</taxon>
    </lineage>
</organism>
<sequence length="146" mass="15485">MKLHELKAAEGSRKVRNRVGRGTSSGNGKTSGRGQKGQKSRSGGGVRLGFEGGQTPLFRRMPKRGFSNINTKEYALVNLDQLNVFEDGTEVTPVVLKEAGIVRAEKSGVKILGNGELTKKLTVKAAKFSKSAEAAITAKGGSIEVI</sequence>
<keyword id="KW-1185">Reference proteome</keyword>
<keyword id="KW-0687">Ribonucleoprotein</keyword>
<keyword id="KW-0689">Ribosomal protein</keyword>
<keyword id="KW-0694">RNA-binding</keyword>
<keyword id="KW-0699">rRNA-binding</keyword>
<comment type="function">
    <text evidence="1">Binds to the 23S rRNA.</text>
</comment>
<comment type="subunit">
    <text evidence="1">Part of the 50S ribosomal subunit.</text>
</comment>
<comment type="similarity">
    <text evidence="1">Belongs to the universal ribosomal protein uL15 family.</text>
</comment>
<gene>
    <name evidence="1" type="primary">rplO</name>
    <name type="ordered locus">SUB0087</name>
</gene>
<feature type="chain" id="PRO_1000166317" description="Large ribosomal subunit protein uL15">
    <location>
        <begin position="1"/>
        <end position="146"/>
    </location>
</feature>
<feature type="region of interest" description="Disordered" evidence="2">
    <location>
        <begin position="1"/>
        <end position="61"/>
    </location>
</feature>
<feature type="compositionally biased region" description="Basic and acidic residues" evidence="2">
    <location>
        <begin position="1"/>
        <end position="13"/>
    </location>
</feature>
<feature type="compositionally biased region" description="Gly residues" evidence="2">
    <location>
        <begin position="23"/>
        <end position="35"/>
    </location>
</feature>
<feature type="compositionally biased region" description="Gly residues" evidence="2">
    <location>
        <begin position="42"/>
        <end position="52"/>
    </location>
</feature>
<evidence type="ECO:0000255" key="1">
    <source>
        <dbReference type="HAMAP-Rule" id="MF_01341"/>
    </source>
</evidence>
<evidence type="ECO:0000256" key="2">
    <source>
        <dbReference type="SAM" id="MobiDB-lite"/>
    </source>
</evidence>
<evidence type="ECO:0000305" key="3"/>
<reference key="1">
    <citation type="journal article" date="2009" name="BMC Genomics">
        <title>Evidence for niche adaptation in the genome of the bovine pathogen Streptococcus uberis.</title>
        <authorList>
            <person name="Ward P.N."/>
            <person name="Holden M.T.G."/>
            <person name="Leigh J.A."/>
            <person name="Lennard N."/>
            <person name="Bignell A."/>
            <person name="Barron A."/>
            <person name="Clark L."/>
            <person name="Quail M.A."/>
            <person name="Woodward J."/>
            <person name="Barrell B.G."/>
            <person name="Egan S.A."/>
            <person name="Field T.R."/>
            <person name="Maskell D."/>
            <person name="Kehoe M."/>
            <person name="Dowson C.G."/>
            <person name="Chanter N."/>
            <person name="Whatmore A.M."/>
            <person name="Bentley S.D."/>
            <person name="Parkhill J."/>
        </authorList>
    </citation>
    <scope>NUCLEOTIDE SEQUENCE [LARGE SCALE GENOMIC DNA]</scope>
    <source>
        <strain>ATCC BAA-854 / 0140J</strain>
    </source>
</reference>